<dbReference type="EC" id="2.7.7.8" evidence="1"/>
<dbReference type="EMBL" id="AE007317">
    <property type="protein sequence ID" value="AAK99320.1"/>
    <property type="status" value="ALT_INIT"/>
    <property type="molecule type" value="Genomic_DNA"/>
</dbReference>
<dbReference type="PIR" id="D97936">
    <property type="entry name" value="D97936"/>
</dbReference>
<dbReference type="RefSeq" id="NP_358110.1">
    <property type="nucleotide sequence ID" value="NC_003098.1"/>
</dbReference>
<dbReference type="RefSeq" id="WP_001118978.1">
    <property type="nucleotide sequence ID" value="NC_003098.1"/>
</dbReference>
<dbReference type="SMR" id="Q8DQT0"/>
<dbReference type="STRING" id="171101.spr0516"/>
<dbReference type="KEGG" id="spr:spr0516"/>
<dbReference type="PATRIC" id="fig|171101.6.peg.568"/>
<dbReference type="eggNOG" id="COG1185">
    <property type="taxonomic scope" value="Bacteria"/>
</dbReference>
<dbReference type="HOGENOM" id="CLU_004217_2_2_9"/>
<dbReference type="Proteomes" id="UP000000586">
    <property type="component" value="Chromosome"/>
</dbReference>
<dbReference type="GO" id="GO:0005829">
    <property type="term" value="C:cytosol"/>
    <property type="evidence" value="ECO:0000318"/>
    <property type="project" value="GO_Central"/>
</dbReference>
<dbReference type="GO" id="GO:0000175">
    <property type="term" value="F:3'-5'-RNA exonuclease activity"/>
    <property type="evidence" value="ECO:0000318"/>
    <property type="project" value="GO_Central"/>
</dbReference>
<dbReference type="GO" id="GO:0000287">
    <property type="term" value="F:magnesium ion binding"/>
    <property type="evidence" value="ECO:0007669"/>
    <property type="project" value="UniProtKB-UniRule"/>
</dbReference>
<dbReference type="GO" id="GO:0004654">
    <property type="term" value="F:polyribonucleotide nucleotidyltransferase activity"/>
    <property type="evidence" value="ECO:0000318"/>
    <property type="project" value="GO_Central"/>
</dbReference>
<dbReference type="GO" id="GO:0003723">
    <property type="term" value="F:RNA binding"/>
    <property type="evidence" value="ECO:0007669"/>
    <property type="project" value="UniProtKB-UniRule"/>
</dbReference>
<dbReference type="GO" id="GO:0006402">
    <property type="term" value="P:mRNA catabolic process"/>
    <property type="evidence" value="ECO:0007669"/>
    <property type="project" value="UniProtKB-UniRule"/>
</dbReference>
<dbReference type="GO" id="GO:0006401">
    <property type="term" value="P:RNA catabolic process"/>
    <property type="evidence" value="ECO:0000318"/>
    <property type="project" value="GO_Central"/>
</dbReference>
<dbReference type="GO" id="GO:0006396">
    <property type="term" value="P:RNA processing"/>
    <property type="evidence" value="ECO:0007669"/>
    <property type="project" value="InterPro"/>
</dbReference>
<dbReference type="CDD" id="cd02393">
    <property type="entry name" value="KH-I_PNPase"/>
    <property type="match status" value="1"/>
</dbReference>
<dbReference type="CDD" id="cd11363">
    <property type="entry name" value="RNase_PH_PNPase_1"/>
    <property type="match status" value="1"/>
</dbReference>
<dbReference type="CDD" id="cd11364">
    <property type="entry name" value="RNase_PH_PNPase_2"/>
    <property type="match status" value="1"/>
</dbReference>
<dbReference type="FunFam" id="2.40.50.140:FF:000023">
    <property type="entry name" value="Polyribonucleotide nucleotidyltransferase"/>
    <property type="match status" value="1"/>
</dbReference>
<dbReference type="FunFam" id="3.30.1370.10:FF:000001">
    <property type="entry name" value="Polyribonucleotide nucleotidyltransferase"/>
    <property type="match status" value="1"/>
</dbReference>
<dbReference type="FunFam" id="3.30.230.70:FF:000001">
    <property type="entry name" value="Polyribonucleotide nucleotidyltransferase"/>
    <property type="match status" value="1"/>
</dbReference>
<dbReference type="FunFam" id="3.30.230.70:FF:000002">
    <property type="entry name" value="Polyribonucleotide nucleotidyltransferase"/>
    <property type="match status" value="1"/>
</dbReference>
<dbReference type="Gene3D" id="3.30.230.70">
    <property type="entry name" value="GHMP Kinase, N-terminal domain"/>
    <property type="match status" value="2"/>
</dbReference>
<dbReference type="Gene3D" id="3.30.1370.10">
    <property type="entry name" value="K Homology domain, type 1"/>
    <property type="match status" value="1"/>
</dbReference>
<dbReference type="Gene3D" id="2.40.50.140">
    <property type="entry name" value="Nucleic acid-binding proteins"/>
    <property type="match status" value="1"/>
</dbReference>
<dbReference type="HAMAP" id="MF_01595">
    <property type="entry name" value="PNPase"/>
    <property type="match status" value="1"/>
</dbReference>
<dbReference type="InterPro" id="IPR001247">
    <property type="entry name" value="ExoRNase_PH_dom1"/>
</dbReference>
<dbReference type="InterPro" id="IPR015847">
    <property type="entry name" value="ExoRNase_PH_dom2"/>
</dbReference>
<dbReference type="InterPro" id="IPR036345">
    <property type="entry name" value="ExoRNase_PH_dom2_sf"/>
</dbReference>
<dbReference type="InterPro" id="IPR004087">
    <property type="entry name" value="KH_dom"/>
</dbReference>
<dbReference type="InterPro" id="IPR004088">
    <property type="entry name" value="KH_dom_type_1"/>
</dbReference>
<dbReference type="InterPro" id="IPR036612">
    <property type="entry name" value="KH_dom_type_1_sf"/>
</dbReference>
<dbReference type="InterPro" id="IPR012340">
    <property type="entry name" value="NA-bd_OB-fold"/>
</dbReference>
<dbReference type="InterPro" id="IPR012162">
    <property type="entry name" value="PNPase"/>
</dbReference>
<dbReference type="InterPro" id="IPR027408">
    <property type="entry name" value="PNPase/RNase_PH_dom_sf"/>
</dbReference>
<dbReference type="InterPro" id="IPR015848">
    <property type="entry name" value="PNPase_PH_RNA-bd_bac/org-type"/>
</dbReference>
<dbReference type="InterPro" id="IPR036456">
    <property type="entry name" value="PNPase_PH_RNA-bd_sf"/>
</dbReference>
<dbReference type="InterPro" id="IPR020568">
    <property type="entry name" value="Ribosomal_Su5_D2-typ_SF"/>
</dbReference>
<dbReference type="InterPro" id="IPR003029">
    <property type="entry name" value="S1_domain"/>
</dbReference>
<dbReference type="NCBIfam" id="TIGR03591">
    <property type="entry name" value="polynuc_phos"/>
    <property type="match status" value="1"/>
</dbReference>
<dbReference type="NCBIfam" id="NF008805">
    <property type="entry name" value="PRK11824.1"/>
    <property type="match status" value="1"/>
</dbReference>
<dbReference type="PANTHER" id="PTHR11252">
    <property type="entry name" value="POLYRIBONUCLEOTIDE NUCLEOTIDYLTRANSFERASE"/>
    <property type="match status" value="1"/>
</dbReference>
<dbReference type="PANTHER" id="PTHR11252:SF0">
    <property type="entry name" value="POLYRIBONUCLEOTIDE NUCLEOTIDYLTRANSFERASE 1, MITOCHONDRIAL"/>
    <property type="match status" value="1"/>
</dbReference>
<dbReference type="Pfam" id="PF00013">
    <property type="entry name" value="KH_1"/>
    <property type="match status" value="1"/>
</dbReference>
<dbReference type="Pfam" id="PF03726">
    <property type="entry name" value="PNPase"/>
    <property type="match status" value="1"/>
</dbReference>
<dbReference type="Pfam" id="PF01138">
    <property type="entry name" value="RNase_PH"/>
    <property type="match status" value="2"/>
</dbReference>
<dbReference type="Pfam" id="PF03725">
    <property type="entry name" value="RNase_PH_C"/>
    <property type="match status" value="2"/>
</dbReference>
<dbReference type="Pfam" id="PF00575">
    <property type="entry name" value="S1"/>
    <property type="match status" value="1"/>
</dbReference>
<dbReference type="PIRSF" id="PIRSF005499">
    <property type="entry name" value="PNPase"/>
    <property type="match status" value="1"/>
</dbReference>
<dbReference type="SMART" id="SM00322">
    <property type="entry name" value="KH"/>
    <property type="match status" value="1"/>
</dbReference>
<dbReference type="SMART" id="SM00316">
    <property type="entry name" value="S1"/>
    <property type="match status" value="1"/>
</dbReference>
<dbReference type="SUPFAM" id="SSF54791">
    <property type="entry name" value="Eukaryotic type KH-domain (KH-domain type I)"/>
    <property type="match status" value="1"/>
</dbReference>
<dbReference type="SUPFAM" id="SSF50249">
    <property type="entry name" value="Nucleic acid-binding proteins"/>
    <property type="match status" value="1"/>
</dbReference>
<dbReference type="SUPFAM" id="SSF46915">
    <property type="entry name" value="Polynucleotide phosphorylase/guanosine pentaphosphate synthase (PNPase/GPSI), domain 3"/>
    <property type="match status" value="1"/>
</dbReference>
<dbReference type="SUPFAM" id="SSF55666">
    <property type="entry name" value="Ribonuclease PH domain 2-like"/>
    <property type="match status" value="2"/>
</dbReference>
<dbReference type="SUPFAM" id="SSF54211">
    <property type="entry name" value="Ribosomal protein S5 domain 2-like"/>
    <property type="match status" value="2"/>
</dbReference>
<dbReference type="PROSITE" id="PS50084">
    <property type="entry name" value="KH_TYPE_1"/>
    <property type="match status" value="1"/>
</dbReference>
<dbReference type="PROSITE" id="PS50126">
    <property type="entry name" value="S1"/>
    <property type="match status" value="1"/>
</dbReference>
<feature type="chain" id="PRO_0000329870" description="Polyribonucleotide nucleotidyltransferase">
    <location>
        <begin position="1"/>
        <end position="737"/>
    </location>
</feature>
<feature type="domain" description="KH" evidence="1">
    <location>
        <begin position="556"/>
        <end position="615"/>
    </location>
</feature>
<feature type="domain" description="S1 motif" evidence="1">
    <location>
        <begin position="625"/>
        <end position="693"/>
    </location>
</feature>
<feature type="region of interest" description="Disordered" evidence="2">
    <location>
        <begin position="691"/>
        <end position="737"/>
    </location>
</feature>
<feature type="compositionally biased region" description="Basic and acidic residues" evidence="2">
    <location>
        <begin position="700"/>
        <end position="737"/>
    </location>
</feature>
<feature type="binding site" evidence="1">
    <location>
        <position position="489"/>
    </location>
    <ligand>
        <name>Mg(2+)</name>
        <dbReference type="ChEBI" id="CHEBI:18420"/>
    </ligand>
</feature>
<feature type="binding site" evidence="1">
    <location>
        <position position="495"/>
    </location>
    <ligand>
        <name>Mg(2+)</name>
        <dbReference type="ChEBI" id="CHEBI:18420"/>
    </ligand>
</feature>
<comment type="function">
    <text evidence="1">Involved in mRNA degradation. Catalyzes the phosphorolysis of single-stranded polyribonucleotides processively in the 3'- to 5'-direction.</text>
</comment>
<comment type="catalytic activity">
    <reaction evidence="1">
        <text>RNA(n+1) + phosphate = RNA(n) + a ribonucleoside 5'-diphosphate</text>
        <dbReference type="Rhea" id="RHEA:22096"/>
        <dbReference type="Rhea" id="RHEA-COMP:14527"/>
        <dbReference type="Rhea" id="RHEA-COMP:17342"/>
        <dbReference type="ChEBI" id="CHEBI:43474"/>
        <dbReference type="ChEBI" id="CHEBI:57930"/>
        <dbReference type="ChEBI" id="CHEBI:140395"/>
        <dbReference type="EC" id="2.7.7.8"/>
    </reaction>
</comment>
<comment type="cofactor">
    <cofactor evidence="1">
        <name>Mg(2+)</name>
        <dbReference type="ChEBI" id="CHEBI:18420"/>
    </cofactor>
</comment>
<comment type="subcellular location">
    <subcellularLocation>
        <location evidence="1">Cytoplasm</location>
    </subcellularLocation>
</comment>
<comment type="similarity">
    <text evidence="1">Belongs to the polyribonucleotide nucleotidyltransferase family.</text>
</comment>
<comment type="sequence caution" evidence="3">
    <conflict type="erroneous initiation">
        <sequence resource="EMBL-CDS" id="AAK99320"/>
    </conflict>
</comment>
<evidence type="ECO:0000255" key="1">
    <source>
        <dbReference type="HAMAP-Rule" id="MF_01595"/>
    </source>
</evidence>
<evidence type="ECO:0000256" key="2">
    <source>
        <dbReference type="SAM" id="MobiDB-lite"/>
    </source>
</evidence>
<evidence type="ECO:0000305" key="3"/>
<sequence length="737" mass="81017">MAKQVFQTTFAGRELIVETGQVAKQANGSVVVRYGESTVLTAAVMSKKMATGDFFPLQVNYEEKMYAAGKFPGGFMKREGRPSTDATLTARLIDRPIRPMFAEGFRNEVQVINTVLSYDENASAPMAAMFGSSLALSISDIPFDGPIAGVQVGYVDGQIIINPSQEQAEQSLLELTVAGTKHAINMVESGAKELSEEIMLEALLKGHEAVKELIAFQEEIVAAVGKEKAEVELLHVDAELQAEIIAAYNSDLQKAVQVEEKLAREAATQAVKDQVTAVYEEKYANHEEFDRIMRDVAEILEQMEHAEVRRLITEDKVRPDGRKVDEIRPLDAVVDFLPRVHGSGLFTRGQTQALSVLTLAPMGETQIIDGLDPEYKKRFMHHYNFPQYSVGETGRYGAPGRREIGHGALGERALAQVLPSLEEFPYAIRLVAEVLESNGSSSQASICAGTLALMAGGVPIKAPVAGIAMGLISDGNNYTVLTDIQGLEDHFGDMDFKVAGTRDGITALQMDIKIQGITAEILTEALAQAKKARFEILDVIEATIPEVRPELAPTAPKIDTIKIDVDKIKIVIGKGGETIDKIIAETGVKIDIDEEGNVSIYSSDQDAINRAKEIIAGLVREAKVDEVYRAKVVRIEKFGAFVNLFDKTDALVHISEMAWTRTNRVEDLVEIGDEVDVKVIKIDEKGRIDASMKALLPRPPKPEHDEKGEKSERPHRPRHQKDYKPKKEFTETPKDSE</sequence>
<accession>Q8DQT0</accession>
<protein>
    <recommendedName>
        <fullName evidence="1">Polyribonucleotide nucleotidyltransferase</fullName>
        <ecNumber evidence="1">2.7.7.8</ecNumber>
    </recommendedName>
    <alternativeName>
        <fullName evidence="1">Polynucleotide phosphorylase</fullName>
        <shortName evidence="1">PNPase</shortName>
    </alternativeName>
</protein>
<reference key="1">
    <citation type="journal article" date="2001" name="J. Bacteriol.">
        <title>Genome of the bacterium Streptococcus pneumoniae strain R6.</title>
        <authorList>
            <person name="Hoskins J."/>
            <person name="Alborn W.E. Jr."/>
            <person name="Arnold J."/>
            <person name="Blaszczak L.C."/>
            <person name="Burgett S."/>
            <person name="DeHoff B.S."/>
            <person name="Estrem S.T."/>
            <person name="Fritz L."/>
            <person name="Fu D.-J."/>
            <person name="Fuller W."/>
            <person name="Geringer C."/>
            <person name="Gilmour R."/>
            <person name="Glass J.S."/>
            <person name="Khoja H."/>
            <person name="Kraft A.R."/>
            <person name="Lagace R.E."/>
            <person name="LeBlanc D.J."/>
            <person name="Lee L.N."/>
            <person name="Lefkowitz E.J."/>
            <person name="Lu J."/>
            <person name="Matsushima P."/>
            <person name="McAhren S.M."/>
            <person name="McHenney M."/>
            <person name="McLeaster K."/>
            <person name="Mundy C.W."/>
            <person name="Nicas T.I."/>
            <person name="Norris F.H."/>
            <person name="O'Gara M."/>
            <person name="Peery R.B."/>
            <person name="Robertson G.T."/>
            <person name="Rockey P."/>
            <person name="Sun P.-M."/>
            <person name="Winkler M.E."/>
            <person name="Yang Y."/>
            <person name="Young-Bellido M."/>
            <person name="Zhao G."/>
            <person name="Zook C.A."/>
            <person name="Baltz R.H."/>
            <person name="Jaskunas S.R."/>
            <person name="Rosteck P.R. Jr."/>
            <person name="Skatrud P.L."/>
            <person name="Glass J.I."/>
        </authorList>
    </citation>
    <scope>NUCLEOTIDE SEQUENCE [LARGE SCALE GENOMIC DNA]</scope>
    <source>
        <strain>ATCC BAA-255 / R6</strain>
    </source>
</reference>
<proteinExistence type="inferred from homology"/>
<name>PNP_STRR6</name>
<keyword id="KW-0963">Cytoplasm</keyword>
<keyword id="KW-0460">Magnesium</keyword>
<keyword id="KW-0479">Metal-binding</keyword>
<keyword id="KW-0548">Nucleotidyltransferase</keyword>
<keyword id="KW-1185">Reference proteome</keyword>
<keyword id="KW-0694">RNA-binding</keyword>
<keyword id="KW-0808">Transferase</keyword>
<organism>
    <name type="scientific">Streptococcus pneumoniae (strain ATCC BAA-255 / R6)</name>
    <dbReference type="NCBI Taxonomy" id="171101"/>
    <lineage>
        <taxon>Bacteria</taxon>
        <taxon>Bacillati</taxon>
        <taxon>Bacillota</taxon>
        <taxon>Bacilli</taxon>
        <taxon>Lactobacillales</taxon>
        <taxon>Streptococcaceae</taxon>
        <taxon>Streptococcus</taxon>
    </lineage>
</organism>
<gene>
    <name evidence="1" type="primary">pnp</name>
    <name type="ordered locus">spr0516</name>
</gene>